<accession>Q8T8B9</accession>
<feature type="chain" id="PRO_0000190983" description="2-amino-3-carboxymuconate-6-semialdehyde decarboxylase">
    <location>
        <begin position="1"/>
        <end position="401"/>
    </location>
</feature>
<feature type="binding site" evidence="1">
    <location>
        <position position="18"/>
    </location>
    <ligand>
        <name>Zn(2+)</name>
        <dbReference type="ChEBI" id="CHEBI:29105"/>
    </ligand>
</feature>
<feature type="binding site" evidence="1">
    <location>
        <position position="20"/>
    </location>
    <ligand>
        <name>Zn(2+)</name>
        <dbReference type="ChEBI" id="CHEBI:29105"/>
    </ligand>
</feature>
<feature type="binding site" evidence="1">
    <location>
        <position position="59"/>
    </location>
    <ligand>
        <name>substrate</name>
    </ligand>
</feature>
<feature type="binding site" evidence="1">
    <location>
        <position position="234"/>
    </location>
    <ligand>
        <name>Zn(2+)</name>
        <dbReference type="ChEBI" id="CHEBI:29105"/>
    </ligand>
</feature>
<feature type="binding site" evidence="1">
    <location>
        <position position="352"/>
    </location>
    <ligand>
        <name>Zn(2+)</name>
        <dbReference type="ChEBI" id="CHEBI:29105"/>
    </ligand>
</feature>
<dbReference type="EC" id="4.1.1.45" evidence="1"/>
<dbReference type="EMBL" id="AB071420">
    <property type="protein sequence ID" value="BAB86940.1"/>
    <property type="molecule type" value="mRNA"/>
</dbReference>
<dbReference type="EMBL" id="FO081503">
    <property type="protein sequence ID" value="CCD72053.1"/>
    <property type="molecule type" value="Genomic_DNA"/>
</dbReference>
<dbReference type="RefSeq" id="NP_001022935.1">
    <property type="nucleotide sequence ID" value="NM_001027764.3"/>
</dbReference>
<dbReference type="SMR" id="Q8T8B9"/>
<dbReference type="BioGRID" id="40540">
    <property type="interactions" value="2"/>
</dbReference>
<dbReference type="FunCoup" id="Q8T8B9">
    <property type="interactions" value="128"/>
</dbReference>
<dbReference type="STRING" id="6239.Y71D11A.3b.1"/>
<dbReference type="PaxDb" id="6239-Y71D11A.3b"/>
<dbReference type="PeptideAtlas" id="Q8T8B9"/>
<dbReference type="EnsemblMetazoa" id="Y71D11A.3b.1">
    <property type="protein sequence ID" value="Y71D11A.3b.1"/>
    <property type="gene ID" value="WBGene00022104"/>
</dbReference>
<dbReference type="GeneID" id="175280"/>
<dbReference type="KEGG" id="cel:CELE_Y71D11A.3"/>
<dbReference type="UCSC" id="Y71D11A.3a">
    <property type="organism name" value="c. elegans"/>
</dbReference>
<dbReference type="AGR" id="WB:WBGene00022104"/>
<dbReference type="CTD" id="175280"/>
<dbReference type="WormBase" id="Y71D11A.3b">
    <property type="protein sequence ID" value="CE32030"/>
    <property type="gene ID" value="WBGene00022104"/>
    <property type="gene designation" value="acsd-1"/>
</dbReference>
<dbReference type="eggNOG" id="KOG4245">
    <property type="taxonomic scope" value="Eukaryota"/>
</dbReference>
<dbReference type="InParanoid" id="Q8T8B9"/>
<dbReference type="OMA" id="RIESCIM"/>
<dbReference type="OrthoDB" id="191270at2759"/>
<dbReference type="PhylomeDB" id="Q8T8B9"/>
<dbReference type="UniPathway" id="UPA00270"/>
<dbReference type="PRO" id="PR:Q8T8B9"/>
<dbReference type="Proteomes" id="UP000001940">
    <property type="component" value="Chromosome III"/>
</dbReference>
<dbReference type="Bgee" id="WBGene00022104">
    <property type="expression patterns" value="Expressed in embryo and 4 other cell types or tissues"/>
</dbReference>
<dbReference type="ExpressionAtlas" id="Q8T8B9">
    <property type="expression patterns" value="baseline and differential"/>
</dbReference>
<dbReference type="GO" id="GO:0005737">
    <property type="term" value="C:cytoplasm"/>
    <property type="evidence" value="ECO:0000318"/>
    <property type="project" value="GO_Central"/>
</dbReference>
<dbReference type="GO" id="GO:0005829">
    <property type="term" value="C:cytosol"/>
    <property type="evidence" value="ECO:0000250"/>
    <property type="project" value="UniProtKB"/>
</dbReference>
<dbReference type="GO" id="GO:0001760">
    <property type="term" value="F:aminocarboxymuconate-semialdehyde decarboxylase activity"/>
    <property type="evidence" value="ECO:0000250"/>
    <property type="project" value="UniProtKB"/>
</dbReference>
<dbReference type="GO" id="GO:0016787">
    <property type="term" value="F:hydrolase activity"/>
    <property type="evidence" value="ECO:0007669"/>
    <property type="project" value="InterPro"/>
</dbReference>
<dbReference type="GO" id="GO:0046872">
    <property type="term" value="F:metal ion binding"/>
    <property type="evidence" value="ECO:0007669"/>
    <property type="project" value="UniProtKB-KW"/>
</dbReference>
<dbReference type="GO" id="GO:1904985">
    <property type="term" value="P:negative regulation of quinolinate biosynthetic process"/>
    <property type="evidence" value="ECO:0000250"/>
    <property type="project" value="UniProtKB"/>
</dbReference>
<dbReference type="GO" id="GO:0019748">
    <property type="term" value="P:secondary metabolic process"/>
    <property type="evidence" value="ECO:0000318"/>
    <property type="project" value="GO_Central"/>
</dbReference>
<dbReference type="FunFam" id="3.20.20.140:FF:000328">
    <property type="entry name" value="2-amino-3-carboxymuconate-6-semialdehyde decarboxylase"/>
    <property type="match status" value="1"/>
</dbReference>
<dbReference type="Gene3D" id="3.20.20.140">
    <property type="entry name" value="Metal-dependent hydrolases"/>
    <property type="match status" value="2"/>
</dbReference>
<dbReference type="InterPro" id="IPR032465">
    <property type="entry name" value="ACMSD"/>
</dbReference>
<dbReference type="InterPro" id="IPR006680">
    <property type="entry name" value="Amidohydro-rel"/>
</dbReference>
<dbReference type="InterPro" id="IPR032466">
    <property type="entry name" value="Metal_Hydrolase"/>
</dbReference>
<dbReference type="PANTHER" id="PTHR21240">
    <property type="entry name" value="2-AMINO-3-CARBOXYLMUCONATE-6-SEMIALDEHYDE DECARBOXYLASE"/>
    <property type="match status" value="1"/>
</dbReference>
<dbReference type="PANTHER" id="PTHR21240:SF27">
    <property type="entry name" value="2-AMINO-3-CARBOXYMUCONATE-6-SEMIALDEHYDE DECARBOXYLASE"/>
    <property type="match status" value="1"/>
</dbReference>
<dbReference type="Pfam" id="PF04909">
    <property type="entry name" value="Amidohydro_2"/>
    <property type="match status" value="1"/>
</dbReference>
<dbReference type="SUPFAM" id="SSF51556">
    <property type="entry name" value="Metallo-dependent hydrolases"/>
    <property type="match status" value="1"/>
</dbReference>
<evidence type="ECO:0000250" key="1">
    <source>
        <dbReference type="UniProtKB" id="Q8TDX5"/>
    </source>
</evidence>
<evidence type="ECO:0000305" key="2"/>
<evidence type="ECO:0000312" key="3">
    <source>
        <dbReference type="EMBL" id="BAB86940.1"/>
    </source>
</evidence>
<evidence type="ECO:0000312" key="4">
    <source>
        <dbReference type="WormBase" id="Y71D11A.3b"/>
    </source>
</evidence>
<sequence length="401" mass="45746">MPICEFSATSKSRKIDVHAHVLPKNIPDFQEKFGYPGFVRLDHKEDGTTHMVKDGKLFRVVEPNCFDTETRIADMNRANVNVQCLSTVPVMFSYWAKPADTEIVARFVNDDLLAECQKFPDRLVPLGTLPMNDVQRAVEIFGKRIFFFEIWSPAKKSPEEVKRCVSMGIKGFEVGSHVAEKSLDHRDFWPLYKLTESFKLSTIMPGFCEFFENWGLTTKTPGICEELSVVLFVHPWDMHMWDGRLDKYWMPWLVGMPSETAQAICSVLMGNILVLFPKLKLCFAHGGGAYPQIRGRVSHGWNVRPDLCAGKCKVAPNKLDGLLWTDSLVHDPKALELLINTVGKEHIVLGTDYPFPLGELEVGRVVEEYKPFSAKDREDLLWKNAVKMLDIDENLLFNKDF</sequence>
<name>ACMSD_CAEEL</name>
<keyword id="KW-0210">Decarboxylase</keyword>
<keyword id="KW-0456">Lyase</keyword>
<keyword id="KW-0479">Metal-binding</keyword>
<keyword id="KW-1185">Reference proteome</keyword>
<keyword id="KW-0862">Zinc</keyword>
<comment type="function">
    <text evidence="1">Converts alpha-amino-beta-carboxymuconate-epsilon-semialdehyde (ACMS) to alpha-aminomuconate semialdehyde (AMS).</text>
</comment>
<comment type="catalytic activity">
    <reaction evidence="1">
        <text>2-amino-3-carboxymuconate 6-semialdehyde + H(+) = 2-aminomuconate 6-semialdehyde + CO2</text>
        <dbReference type="Rhea" id="RHEA:16557"/>
        <dbReference type="ChEBI" id="CHEBI:15378"/>
        <dbReference type="ChEBI" id="CHEBI:16526"/>
        <dbReference type="ChEBI" id="CHEBI:77634"/>
        <dbReference type="ChEBI" id="CHEBI:77803"/>
        <dbReference type="EC" id="4.1.1.45"/>
    </reaction>
</comment>
<comment type="pathway">
    <text evidence="1">Secondary metabolite metabolism; quinolate metabolism.</text>
</comment>
<comment type="subunit">
    <text evidence="1">Monomer.</text>
</comment>
<comment type="similarity">
    <text evidence="2">Belongs to the metallo-dependent hydrolases superfamily. ACMSD family.</text>
</comment>
<proteinExistence type="evidence at transcript level"/>
<protein>
    <recommendedName>
        <fullName evidence="1">2-amino-3-carboxymuconate-6-semialdehyde decarboxylase</fullName>
        <ecNumber evidence="1">4.1.1.45</ecNumber>
    </recommendedName>
    <alternativeName>
        <fullName evidence="1">Picolinate carboxylase</fullName>
    </alternativeName>
</protein>
<reference evidence="2" key="1">
    <citation type="journal article" date="2002" name="J. Biol. Chem.">
        <title>Identification and expression of a cDNA encoding human alpha-amino-beta-carboxymuconate-epsilon-semialdehyde decarboxylase (ACMSD). A key enzyme for the tryptophan-niacine pathway and 'quinolinate hypothesis'.</title>
        <authorList>
            <person name="Fukuoka S."/>
            <person name="Ishiguro K."/>
            <person name="Yanagihara K."/>
            <person name="Tanabe A."/>
            <person name="Egashira Y."/>
            <person name="Sanada H."/>
            <person name="Shibata K."/>
        </authorList>
    </citation>
    <scope>NUCLEOTIDE SEQUENCE [MRNA]</scope>
</reference>
<reference key="2">
    <citation type="journal article" date="1998" name="Science">
        <title>Genome sequence of the nematode C. elegans: a platform for investigating biology.</title>
        <authorList>
            <consortium name="The C. elegans sequencing consortium"/>
        </authorList>
    </citation>
    <scope>NUCLEOTIDE SEQUENCE [LARGE SCALE GENOMIC DNA]</scope>
    <source>
        <strain>Bristol N2</strain>
    </source>
</reference>
<organism evidence="3">
    <name type="scientific">Caenorhabditis elegans</name>
    <dbReference type="NCBI Taxonomy" id="6239"/>
    <lineage>
        <taxon>Eukaryota</taxon>
        <taxon>Metazoa</taxon>
        <taxon>Ecdysozoa</taxon>
        <taxon>Nematoda</taxon>
        <taxon>Chromadorea</taxon>
        <taxon>Rhabditida</taxon>
        <taxon>Rhabditina</taxon>
        <taxon>Rhabditomorpha</taxon>
        <taxon>Rhabditoidea</taxon>
        <taxon>Rhabditidae</taxon>
        <taxon>Peloderinae</taxon>
        <taxon>Caenorhabditis</taxon>
    </lineage>
</organism>
<gene>
    <name evidence="4" type="primary">acsd-1</name>
    <name evidence="4" type="synonym">acmsd</name>
    <name evidence="4" type="ORF">Y71D11A.3</name>
</gene>